<organism>
    <name type="scientific">Antirrhinum majus</name>
    <name type="common">Garden snapdragon</name>
    <dbReference type="NCBI Taxonomy" id="4151"/>
    <lineage>
        <taxon>Eukaryota</taxon>
        <taxon>Viridiplantae</taxon>
        <taxon>Streptophyta</taxon>
        <taxon>Embryophyta</taxon>
        <taxon>Tracheophyta</taxon>
        <taxon>Spermatophyta</taxon>
        <taxon>Magnoliopsida</taxon>
        <taxon>eudicotyledons</taxon>
        <taxon>Gunneridae</taxon>
        <taxon>Pentapetalae</taxon>
        <taxon>asterids</taxon>
        <taxon>lamiids</taxon>
        <taxon>Lamiales</taxon>
        <taxon>Plantaginaceae</taxon>
        <taxon>Antirrhineae</taxon>
        <taxon>Antirrhinum</taxon>
    </lineage>
</organism>
<evidence type="ECO:0000250" key="1">
    <source>
        <dbReference type="UniProtKB" id="K7WDL7"/>
    </source>
</evidence>
<evidence type="ECO:0000269" key="2">
    <source>
    </source>
</evidence>
<evidence type="ECO:0000303" key="3">
    <source>
    </source>
</evidence>
<evidence type="ECO:0000305" key="4"/>
<protein>
    <recommendedName>
        <fullName evidence="4">(S)-8-oxocitronellyl enol synthase</fullName>
        <ecNumber evidence="2">1.3.1.122</ecNumber>
    </recommendedName>
    <alternativeName>
        <fullName evidence="4">7-epi-iridoid synthase</fullName>
        <ecNumber evidence="2">1.3.1.123</ecNumber>
    </alternativeName>
    <alternativeName>
        <fullName evidence="3">Iridoid synthase</fullName>
        <shortName evidence="3">AmISY</shortName>
    </alternativeName>
</protein>
<sequence length="387" mass="44183">MSWWYRRSIGETEQKRIEINGVSPTYQSVALIVGVTGIAGSGLAETLSFSDTPGGPWKVYGVARRPCPKWLAKLNVNYVQCDIANTDETYSKVAPLTDITHIFYVSWTGSEDVALNTLMFKNILDSVIPNAPNLKHVSLQTGIKYYWGNMAEMDSTNQPHECPFYENMPRLKQDNFYYNLEDLVYDSAVRKNGLSWSIHRPALIFGFSPCSMMNTVSTLCVYAAICKHENKPLVYTGTETSWTCLWDAVDSDLLAEHFLWAATVPNAKNQAFNINNGDVFKWKHMWKVLAKEFDIEAIGYEGKEPVLLEDLMKDKDSVWDEIVKKHDLVPTKLRDIAAFWLADVVFRNKETLCSMNKNKEFGFMGFRDTTKSFVSSINKMRDFKFIP</sequence>
<comment type="function">
    <text evidence="2">Iridoid synthase that catalyzes the first step in generation of the iridoid ring scaffold using the linear monoterpene (6E)-8-oxogeranial as substrate (PubMed:28701463). Reduces 8-oxogeranial, generating an unstable product that is subsequently cyclized into several possible products, either non-enzymically or by dedicated cyclases (PubMed:28701463). Iridoids comprise a large family of distinctive bicyclic monoterpenes that possess a wide range of pharmacological activities, including anticancer, anti-inflammatory, antifungal and antibacterial activities (PubMed:28701463).</text>
</comment>
<comment type="catalytic activity">
    <reaction evidence="2">
        <text>(S)-8-oxocitronellyl enol + NADP(+) = (6E)-8-oxogeranial + NADPH + H(+)</text>
        <dbReference type="Rhea" id="RHEA:62592"/>
        <dbReference type="ChEBI" id="CHEBI:15378"/>
        <dbReference type="ChEBI" id="CHEBI:57783"/>
        <dbReference type="ChEBI" id="CHEBI:58349"/>
        <dbReference type="ChEBI" id="CHEBI:64239"/>
        <dbReference type="ChEBI" id="CHEBI:144481"/>
        <dbReference type="EC" id="1.3.1.122"/>
    </reaction>
    <physiologicalReaction direction="right-to-left" evidence="2">
        <dbReference type="Rhea" id="RHEA:62594"/>
    </physiologicalReaction>
</comment>
<comment type="catalytic activity">
    <reaction evidence="1">
        <text>(S)-8-oxocitronellyl enol + NAD(+) = (6E)-8-oxogeranial + NADH + H(+)</text>
        <dbReference type="Rhea" id="RHEA:62596"/>
        <dbReference type="ChEBI" id="CHEBI:15378"/>
        <dbReference type="ChEBI" id="CHEBI:57540"/>
        <dbReference type="ChEBI" id="CHEBI:57945"/>
        <dbReference type="ChEBI" id="CHEBI:64239"/>
        <dbReference type="ChEBI" id="CHEBI:144481"/>
        <dbReference type="EC" id="1.3.1.122"/>
    </reaction>
    <physiologicalReaction direction="right-to-left" evidence="1">
        <dbReference type="Rhea" id="RHEA:62598"/>
    </physiologicalReaction>
</comment>
<comment type="catalytic activity">
    <reaction evidence="2">
        <text>(R)-8-oxocitronellyl enol + NADP(+) = (6E)-8-oxogeranial + NADPH + H(+)</text>
        <dbReference type="Rhea" id="RHEA:61432"/>
        <dbReference type="ChEBI" id="CHEBI:15378"/>
        <dbReference type="ChEBI" id="CHEBI:57783"/>
        <dbReference type="ChEBI" id="CHEBI:58349"/>
        <dbReference type="ChEBI" id="CHEBI:64239"/>
        <dbReference type="ChEBI" id="CHEBI:144487"/>
        <dbReference type="EC" id="1.3.1.123"/>
    </reaction>
    <physiologicalReaction direction="right-to-left" evidence="2">
        <dbReference type="Rhea" id="RHEA:61434"/>
    </physiologicalReaction>
</comment>
<comment type="biophysicochemical properties">
    <kinetics>
        <KM evidence="2">1.1 uM for (6E)-8-oxogeranial</KM>
        <text evidence="2">kcat is 0.72 sec(-1) with (6E)-8-oxogeranial as substrate.</text>
    </kinetics>
</comment>
<comment type="tissue specificity">
    <text evidence="2">Expressed in leaves.</text>
</comment>
<comment type="similarity">
    <text evidence="4">Belongs to the short-chain dehydrogenases/reductases (SDR) family. Highly divergent.</text>
</comment>
<gene>
    <name evidence="3" type="primary">ISY</name>
</gene>
<name>ISY_ANTMA</name>
<keyword id="KW-0520">NAD</keyword>
<keyword id="KW-0521">NADP</keyword>
<keyword id="KW-0560">Oxidoreductase</keyword>
<accession>A0A221J5P3</accession>
<feature type="chain" id="PRO_0000452245" description="(S)-8-oxocitronellyl enol synthase">
    <location>
        <begin position="1"/>
        <end position="387"/>
    </location>
</feature>
<feature type="active site" evidence="1">
    <location>
        <position position="144"/>
    </location>
</feature>
<feature type="active site" evidence="1">
    <location>
        <position position="177"/>
    </location>
</feature>
<feature type="binding site" evidence="1">
    <location>
        <begin position="36"/>
        <end position="38"/>
    </location>
    <ligand>
        <name>NADP(+)</name>
        <dbReference type="ChEBI" id="CHEBI:58349"/>
    </ligand>
</feature>
<feature type="binding site" evidence="1">
    <location>
        <begin position="64"/>
        <end position="65"/>
    </location>
    <ligand>
        <name>NADP(+)</name>
        <dbReference type="ChEBI" id="CHEBI:58349"/>
    </ligand>
</feature>
<feature type="binding site" evidence="1">
    <location>
        <begin position="82"/>
        <end position="83"/>
    </location>
    <ligand>
        <name>NADP(+)</name>
        <dbReference type="ChEBI" id="CHEBI:58349"/>
    </ligand>
</feature>
<feature type="binding site" evidence="1">
    <location>
        <begin position="106"/>
        <end position="107"/>
    </location>
    <ligand>
        <name>NADP(+)</name>
        <dbReference type="ChEBI" id="CHEBI:58349"/>
    </ligand>
</feature>
<feature type="binding site" evidence="1">
    <location>
        <position position="140"/>
    </location>
    <ligand>
        <name>NADP(+)</name>
        <dbReference type="ChEBI" id="CHEBI:58349"/>
    </ligand>
</feature>
<feature type="binding site" evidence="1">
    <location>
        <position position="144"/>
    </location>
    <ligand>
        <name>substrate</name>
    </ligand>
</feature>
<feature type="binding site" evidence="1">
    <location>
        <position position="177"/>
    </location>
    <ligand>
        <name>NADP(+)</name>
        <dbReference type="ChEBI" id="CHEBI:58349"/>
    </ligand>
</feature>
<feature type="binding site" evidence="1">
    <location>
        <position position="177"/>
    </location>
    <ligand>
        <name>substrate</name>
    </ligand>
</feature>
<feature type="binding site" evidence="1">
    <location>
        <begin position="211"/>
        <end position="213"/>
    </location>
    <ligand>
        <name>NADP(+)</name>
        <dbReference type="ChEBI" id="CHEBI:58349"/>
    </ligand>
</feature>
<reference key="1">
    <citation type="journal article" date="2017" name="J. Biol. Chem.">
        <title>Inverted stereocontrol of iridoid synthase in snapdragon.</title>
        <authorList>
            <person name="Kries H."/>
            <person name="Kellner F."/>
            <person name="Kamileen M.O."/>
            <person name="O'Connor S.E."/>
        </authorList>
    </citation>
    <scope>NUCLEOTIDE SEQUENCE [MRNA]</scope>
    <scope>FUNCTION</scope>
    <scope>CATALYTIC ACTIVITY</scope>
    <scope>BIOPHYSICOCHEMICAL PROPERTIES</scope>
    <scope>TISSUE SPECIFICITY</scope>
</reference>
<dbReference type="EC" id="1.3.1.122" evidence="2"/>
<dbReference type="EC" id="1.3.1.123" evidence="2"/>
<dbReference type="EMBL" id="MF281392">
    <property type="protein sequence ID" value="ASM61954.1"/>
    <property type="molecule type" value="mRNA"/>
</dbReference>
<dbReference type="SMR" id="A0A221J5P3"/>
<dbReference type="KEGG" id="ag:ASM61954"/>
<dbReference type="SABIO-RK" id="A0A221J5P3"/>
<dbReference type="GO" id="GO:0016628">
    <property type="term" value="F:oxidoreductase activity, acting on the CH-CH group of donors, NAD or NADP as acceptor"/>
    <property type="evidence" value="ECO:0000314"/>
    <property type="project" value="UniProtKB"/>
</dbReference>
<dbReference type="GO" id="GO:0006721">
    <property type="term" value="P:terpenoid metabolic process"/>
    <property type="evidence" value="ECO:0000314"/>
    <property type="project" value="UniProtKB"/>
</dbReference>
<dbReference type="CDD" id="cd08948">
    <property type="entry name" value="5beta-POR_like_SDR_a"/>
    <property type="match status" value="1"/>
</dbReference>
<dbReference type="FunFam" id="3.40.50.720:FF:000808">
    <property type="entry name" value="Iridoid synthase"/>
    <property type="match status" value="1"/>
</dbReference>
<dbReference type="Gene3D" id="3.40.50.720">
    <property type="entry name" value="NAD(P)-binding Rossmann-like Domain"/>
    <property type="match status" value="1"/>
</dbReference>
<dbReference type="InterPro" id="IPR036291">
    <property type="entry name" value="NAD(P)-bd_dom_sf"/>
</dbReference>
<dbReference type="InterPro" id="IPR055222">
    <property type="entry name" value="PRISE-like_Rossmann-fold"/>
</dbReference>
<dbReference type="PANTHER" id="PTHR32487">
    <property type="entry name" value="3-OXO-DELTA(4,5)-STEROID 5-BETA-REDUCTASE"/>
    <property type="match status" value="1"/>
</dbReference>
<dbReference type="PANTHER" id="PTHR32487:SF0">
    <property type="entry name" value="3-OXO-DELTA(4,5)-STEROID 5-BETA-REDUCTASE"/>
    <property type="match status" value="1"/>
</dbReference>
<dbReference type="Pfam" id="PF22917">
    <property type="entry name" value="PRISE"/>
    <property type="match status" value="1"/>
</dbReference>
<dbReference type="SUPFAM" id="SSF51735">
    <property type="entry name" value="NAD(P)-binding Rossmann-fold domains"/>
    <property type="match status" value="1"/>
</dbReference>
<proteinExistence type="evidence at protein level"/>